<accession>Q5GWT8</accession>
<protein>
    <recommendedName>
        <fullName evidence="1">Small ribosomal subunit protein uS19</fullName>
    </recommendedName>
    <alternativeName>
        <fullName evidence="2">30S ribosomal protein S19</fullName>
    </alternativeName>
</protein>
<organism>
    <name type="scientific">Xanthomonas oryzae pv. oryzae (strain KACC10331 / KXO85)</name>
    <dbReference type="NCBI Taxonomy" id="291331"/>
    <lineage>
        <taxon>Bacteria</taxon>
        <taxon>Pseudomonadati</taxon>
        <taxon>Pseudomonadota</taxon>
        <taxon>Gammaproteobacteria</taxon>
        <taxon>Lysobacterales</taxon>
        <taxon>Lysobacteraceae</taxon>
        <taxon>Xanthomonas</taxon>
    </lineage>
</organism>
<comment type="function">
    <text evidence="1">Protein S19 forms a complex with S13 that binds strongly to the 16S ribosomal RNA.</text>
</comment>
<comment type="similarity">
    <text evidence="1">Belongs to the universal ribosomal protein uS19 family.</text>
</comment>
<sequence>MARSLKKGPFVDHHLAKKVESAAGSKKPIKTWSRRSMILPEMVGITIAVHNGKNHIPVLVNENMVGHKLGEFAVTRTFKGHGGDKKSSR</sequence>
<feature type="chain" id="PRO_0000265465" description="Small ribosomal subunit protein uS19">
    <location>
        <begin position="1"/>
        <end position="89"/>
    </location>
</feature>
<gene>
    <name evidence="1" type="primary">rpsS</name>
    <name type="ordered locus">XOO3579</name>
</gene>
<evidence type="ECO:0000255" key="1">
    <source>
        <dbReference type="HAMAP-Rule" id="MF_00531"/>
    </source>
</evidence>
<evidence type="ECO:0000305" key="2"/>
<reference key="1">
    <citation type="journal article" date="2005" name="Nucleic Acids Res.">
        <title>The genome sequence of Xanthomonas oryzae pathovar oryzae KACC10331, the bacterial blight pathogen of rice.</title>
        <authorList>
            <person name="Lee B.-M."/>
            <person name="Park Y.-J."/>
            <person name="Park D.-S."/>
            <person name="Kang H.-W."/>
            <person name="Kim J.-G."/>
            <person name="Song E.-S."/>
            <person name="Park I.-C."/>
            <person name="Yoon U.-H."/>
            <person name="Hahn J.-H."/>
            <person name="Koo B.-S."/>
            <person name="Lee G.-B."/>
            <person name="Kim H."/>
            <person name="Park H.-S."/>
            <person name="Yoon K.-O."/>
            <person name="Kim J.-H."/>
            <person name="Jung C.-H."/>
            <person name="Koh N.-H."/>
            <person name="Seo J.-S."/>
            <person name="Go S.-J."/>
        </authorList>
    </citation>
    <scope>NUCLEOTIDE SEQUENCE [LARGE SCALE GENOMIC DNA]</scope>
    <source>
        <strain>KACC10331 / KXO85</strain>
    </source>
</reference>
<keyword id="KW-1185">Reference proteome</keyword>
<keyword id="KW-0687">Ribonucleoprotein</keyword>
<keyword id="KW-0689">Ribosomal protein</keyword>
<keyword id="KW-0694">RNA-binding</keyword>
<keyword id="KW-0699">rRNA-binding</keyword>
<dbReference type="EMBL" id="AE013598">
    <property type="protein sequence ID" value="AAW76833.1"/>
    <property type="molecule type" value="Genomic_DNA"/>
</dbReference>
<dbReference type="SMR" id="Q5GWT8"/>
<dbReference type="STRING" id="291331.XOO3579"/>
<dbReference type="KEGG" id="xoo:XOO3579"/>
<dbReference type="HOGENOM" id="CLU_144911_0_1_6"/>
<dbReference type="Proteomes" id="UP000006735">
    <property type="component" value="Chromosome"/>
</dbReference>
<dbReference type="GO" id="GO:0005737">
    <property type="term" value="C:cytoplasm"/>
    <property type="evidence" value="ECO:0007669"/>
    <property type="project" value="UniProtKB-ARBA"/>
</dbReference>
<dbReference type="GO" id="GO:0015935">
    <property type="term" value="C:small ribosomal subunit"/>
    <property type="evidence" value="ECO:0007669"/>
    <property type="project" value="InterPro"/>
</dbReference>
<dbReference type="GO" id="GO:0019843">
    <property type="term" value="F:rRNA binding"/>
    <property type="evidence" value="ECO:0007669"/>
    <property type="project" value="UniProtKB-UniRule"/>
</dbReference>
<dbReference type="GO" id="GO:0003735">
    <property type="term" value="F:structural constituent of ribosome"/>
    <property type="evidence" value="ECO:0007669"/>
    <property type="project" value="InterPro"/>
</dbReference>
<dbReference type="GO" id="GO:0000028">
    <property type="term" value="P:ribosomal small subunit assembly"/>
    <property type="evidence" value="ECO:0007669"/>
    <property type="project" value="TreeGrafter"/>
</dbReference>
<dbReference type="GO" id="GO:0006412">
    <property type="term" value="P:translation"/>
    <property type="evidence" value="ECO:0007669"/>
    <property type="project" value="UniProtKB-UniRule"/>
</dbReference>
<dbReference type="FunFam" id="3.30.860.10:FF:000001">
    <property type="entry name" value="30S ribosomal protein S19"/>
    <property type="match status" value="1"/>
</dbReference>
<dbReference type="Gene3D" id="3.30.860.10">
    <property type="entry name" value="30s Ribosomal Protein S19, Chain A"/>
    <property type="match status" value="1"/>
</dbReference>
<dbReference type="HAMAP" id="MF_00531">
    <property type="entry name" value="Ribosomal_uS19"/>
    <property type="match status" value="1"/>
</dbReference>
<dbReference type="InterPro" id="IPR002222">
    <property type="entry name" value="Ribosomal_uS19"/>
</dbReference>
<dbReference type="InterPro" id="IPR005732">
    <property type="entry name" value="Ribosomal_uS19_bac-type"/>
</dbReference>
<dbReference type="InterPro" id="IPR020934">
    <property type="entry name" value="Ribosomal_uS19_CS"/>
</dbReference>
<dbReference type="InterPro" id="IPR023575">
    <property type="entry name" value="Ribosomal_uS19_SF"/>
</dbReference>
<dbReference type="NCBIfam" id="TIGR01050">
    <property type="entry name" value="rpsS_bact"/>
    <property type="match status" value="1"/>
</dbReference>
<dbReference type="PANTHER" id="PTHR11880">
    <property type="entry name" value="RIBOSOMAL PROTEIN S19P FAMILY MEMBER"/>
    <property type="match status" value="1"/>
</dbReference>
<dbReference type="PANTHER" id="PTHR11880:SF8">
    <property type="entry name" value="SMALL RIBOSOMAL SUBUNIT PROTEIN US19M"/>
    <property type="match status" value="1"/>
</dbReference>
<dbReference type="Pfam" id="PF00203">
    <property type="entry name" value="Ribosomal_S19"/>
    <property type="match status" value="1"/>
</dbReference>
<dbReference type="PIRSF" id="PIRSF002144">
    <property type="entry name" value="Ribosomal_S19"/>
    <property type="match status" value="1"/>
</dbReference>
<dbReference type="PRINTS" id="PR00975">
    <property type="entry name" value="RIBOSOMALS19"/>
</dbReference>
<dbReference type="SUPFAM" id="SSF54570">
    <property type="entry name" value="Ribosomal protein S19"/>
    <property type="match status" value="1"/>
</dbReference>
<dbReference type="PROSITE" id="PS00323">
    <property type="entry name" value="RIBOSOMAL_S19"/>
    <property type="match status" value="1"/>
</dbReference>
<proteinExistence type="inferred from homology"/>
<name>RS19_XANOR</name>